<dbReference type="EMBL" id="BX640423">
    <property type="protein sequence ID" value="CAE39777.1"/>
    <property type="molecule type" value="Genomic_DNA"/>
</dbReference>
<dbReference type="RefSeq" id="WP_003806911.1">
    <property type="nucleotide sequence ID" value="NC_002928.3"/>
</dbReference>
<dbReference type="SMR" id="Q7W2E9"/>
<dbReference type="GeneID" id="93206265"/>
<dbReference type="KEGG" id="bpa:BPP0036"/>
<dbReference type="HOGENOM" id="CLU_078858_2_1_4"/>
<dbReference type="Proteomes" id="UP000001421">
    <property type="component" value="Chromosome"/>
</dbReference>
<dbReference type="GO" id="GO:0022625">
    <property type="term" value="C:cytosolic large ribosomal subunit"/>
    <property type="evidence" value="ECO:0007669"/>
    <property type="project" value="TreeGrafter"/>
</dbReference>
<dbReference type="GO" id="GO:0019843">
    <property type="term" value="F:rRNA binding"/>
    <property type="evidence" value="ECO:0007669"/>
    <property type="project" value="UniProtKB-UniRule"/>
</dbReference>
<dbReference type="GO" id="GO:0003735">
    <property type="term" value="F:structural constituent of ribosome"/>
    <property type="evidence" value="ECO:0007669"/>
    <property type="project" value="InterPro"/>
</dbReference>
<dbReference type="GO" id="GO:0000049">
    <property type="term" value="F:tRNA binding"/>
    <property type="evidence" value="ECO:0007669"/>
    <property type="project" value="UniProtKB-KW"/>
</dbReference>
<dbReference type="GO" id="GO:0006412">
    <property type="term" value="P:translation"/>
    <property type="evidence" value="ECO:0007669"/>
    <property type="project" value="UniProtKB-UniRule"/>
</dbReference>
<dbReference type="CDD" id="cd01433">
    <property type="entry name" value="Ribosomal_L16_L10e"/>
    <property type="match status" value="1"/>
</dbReference>
<dbReference type="FunFam" id="3.90.1170.10:FF:000001">
    <property type="entry name" value="50S ribosomal protein L16"/>
    <property type="match status" value="1"/>
</dbReference>
<dbReference type="Gene3D" id="3.90.1170.10">
    <property type="entry name" value="Ribosomal protein L10e/L16"/>
    <property type="match status" value="1"/>
</dbReference>
<dbReference type="HAMAP" id="MF_01342">
    <property type="entry name" value="Ribosomal_uL16"/>
    <property type="match status" value="1"/>
</dbReference>
<dbReference type="InterPro" id="IPR047873">
    <property type="entry name" value="Ribosomal_uL16"/>
</dbReference>
<dbReference type="InterPro" id="IPR000114">
    <property type="entry name" value="Ribosomal_uL16_bact-type"/>
</dbReference>
<dbReference type="InterPro" id="IPR020798">
    <property type="entry name" value="Ribosomal_uL16_CS"/>
</dbReference>
<dbReference type="InterPro" id="IPR016180">
    <property type="entry name" value="Ribosomal_uL16_dom"/>
</dbReference>
<dbReference type="InterPro" id="IPR036920">
    <property type="entry name" value="Ribosomal_uL16_sf"/>
</dbReference>
<dbReference type="NCBIfam" id="TIGR01164">
    <property type="entry name" value="rplP_bact"/>
    <property type="match status" value="1"/>
</dbReference>
<dbReference type="PANTHER" id="PTHR12220">
    <property type="entry name" value="50S/60S RIBOSOMAL PROTEIN L16"/>
    <property type="match status" value="1"/>
</dbReference>
<dbReference type="PANTHER" id="PTHR12220:SF13">
    <property type="entry name" value="LARGE RIBOSOMAL SUBUNIT PROTEIN UL16M"/>
    <property type="match status" value="1"/>
</dbReference>
<dbReference type="Pfam" id="PF00252">
    <property type="entry name" value="Ribosomal_L16"/>
    <property type="match status" value="1"/>
</dbReference>
<dbReference type="PRINTS" id="PR00060">
    <property type="entry name" value="RIBOSOMALL16"/>
</dbReference>
<dbReference type="SUPFAM" id="SSF54686">
    <property type="entry name" value="Ribosomal protein L16p/L10e"/>
    <property type="match status" value="1"/>
</dbReference>
<dbReference type="PROSITE" id="PS00586">
    <property type="entry name" value="RIBOSOMAL_L16_1"/>
    <property type="match status" value="1"/>
</dbReference>
<dbReference type="PROSITE" id="PS00701">
    <property type="entry name" value="RIBOSOMAL_L16_2"/>
    <property type="match status" value="1"/>
</dbReference>
<proteinExistence type="inferred from homology"/>
<sequence length="138" mass="15509">MLQPSRRKYRKEQKGRNTGLASRGTHVSFGEFGLKATGRGRLTARQIEAARRAINRHIKRGGRIWIRIFPDKPISQKPAEVRMGNGKGNPEYWVAEIQPGKVLYEMEGVSEELAREAFRLAAAKLPISTTFVARHIGA</sequence>
<comment type="function">
    <text evidence="1">Binds 23S rRNA and is also seen to make contacts with the A and possibly P site tRNAs.</text>
</comment>
<comment type="subunit">
    <text evidence="1">Part of the 50S ribosomal subunit.</text>
</comment>
<comment type="similarity">
    <text evidence="1">Belongs to the universal ribosomal protein uL16 family.</text>
</comment>
<accession>Q7W2E9</accession>
<evidence type="ECO:0000255" key="1">
    <source>
        <dbReference type="HAMAP-Rule" id="MF_01342"/>
    </source>
</evidence>
<evidence type="ECO:0000256" key="2">
    <source>
        <dbReference type="SAM" id="MobiDB-lite"/>
    </source>
</evidence>
<evidence type="ECO:0000305" key="3"/>
<reference key="1">
    <citation type="journal article" date="2003" name="Nat. Genet.">
        <title>Comparative analysis of the genome sequences of Bordetella pertussis, Bordetella parapertussis and Bordetella bronchiseptica.</title>
        <authorList>
            <person name="Parkhill J."/>
            <person name="Sebaihia M."/>
            <person name="Preston A."/>
            <person name="Murphy L.D."/>
            <person name="Thomson N.R."/>
            <person name="Harris D.E."/>
            <person name="Holden M.T.G."/>
            <person name="Churcher C.M."/>
            <person name="Bentley S.D."/>
            <person name="Mungall K.L."/>
            <person name="Cerdeno-Tarraga A.-M."/>
            <person name="Temple L."/>
            <person name="James K.D."/>
            <person name="Harris B."/>
            <person name="Quail M.A."/>
            <person name="Achtman M."/>
            <person name="Atkin R."/>
            <person name="Baker S."/>
            <person name="Basham D."/>
            <person name="Bason N."/>
            <person name="Cherevach I."/>
            <person name="Chillingworth T."/>
            <person name="Collins M."/>
            <person name="Cronin A."/>
            <person name="Davis P."/>
            <person name="Doggett J."/>
            <person name="Feltwell T."/>
            <person name="Goble A."/>
            <person name="Hamlin N."/>
            <person name="Hauser H."/>
            <person name="Holroyd S."/>
            <person name="Jagels K."/>
            <person name="Leather S."/>
            <person name="Moule S."/>
            <person name="Norberczak H."/>
            <person name="O'Neil S."/>
            <person name="Ormond D."/>
            <person name="Price C."/>
            <person name="Rabbinowitsch E."/>
            <person name="Rutter S."/>
            <person name="Sanders M."/>
            <person name="Saunders D."/>
            <person name="Seeger K."/>
            <person name="Sharp S."/>
            <person name="Simmonds M."/>
            <person name="Skelton J."/>
            <person name="Squares R."/>
            <person name="Squares S."/>
            <person name="Stevens K."/>
            <person name="Unwin L."/>
            <person name="Whitehead S."/>
            <person name="Barrell B.G."/>
            <person name="Maskell D.J."/>
        </authorList>
    </citation>
    <scope>NUCLEOTIDE SEQUENCE [LARGE SCALE GENOMIC DNA]</scope>
    <source>
        <strain>12822 / ATCC BAA-587 / NCTC 13253</strain>
    </source>
</reference>
<keyword id="KW-0687">Ribonucleoprotein</keyword>
<keyword id="KW-0689">Ribosomal protein</keyword>
<keyword id="KW-0694">RNA-binding</keyword>
<keyword id="KW-0699">rRNA-binding</keyword>
<keyword id="KW-0820">tRNA-binding</keyword>
<name>RL16_BORPA</name>
<organism>
    <name type="scientific">Bordetella parapertussis (strain 12822 / ATCC BAA-587 / NCTC 13253)</name>
    <dbReference type="NCBI Taxonomy" id="257311"/>
    <lineage>
        <taxon>Bacteria</taxon>
        <taxon>Pseudomonadati</taxon>
        <taxon>Pseudomonadota</taxon>
        <taxon>Betaproteobacteria</taxon>
        <taxon>Burkholderiales</taxon>
        <taxon>Alcaligenaceae</taxon>
        <taxon>Bordetella</taxon>
    </lineage>
</organism>
<gene>
    <name evidence="1" type="primary">rplP</name>
    <name type="ordered locus">BPP0036</name>
</gene>
<protein>
    <recommendedName>
        <fullName evidence="1">Large ribosomal subunit protein uL16</fullName>
    </recommendedName>
    <alternativeName>
        <fullName evidence="3">50S ribosomal protein L16</fullName>
    </alternativeName>
</protein>
<feature type="chain" id="PRO_0000062055" description="Large ribosomal subunit protein uL16">
    <location>
        <begin position="1"/>
        <end position="138"/>
    </location>
</feature>
<feature type="region of interest" description="Disordered" evidence="2">
    <location>
        <begin position="1"/>
        <end position="24"/>
    </location>
</feature>
<feature type="compositionally biased region" description="Basic residues" evidence="2">
    <location>
        <begin position="1"/>
        <end position="13"/>
    </location>
</feature>